<name>MBD56_DROME</name>
<gene>
    <name evidence="9 12" type="primary">sba</name>
    <name evidence="8 12" type="synonym">MBD5/6</name>
    <name evidence="12" type="ORF">CG13598</name>
</gene>
<protein>
    <recommendedName>
        <fullName evidence="8">Methyl-CpG-binding domain protein 5/6 homolog sba</fullName>
        <shortName evidence="8">dMBD5/6</shortName>
    </recommendedName>
    <alternativeName>
        <fullName evidence="9">Protein six-banded</fullName>
    </alternativeName>
</protein>
<feature type="chain" id="PRO_0000460436" description="Methyl-CpG-binding domain protein 5/6 homolog sba">
    <location>
        <begin position="1"/>
        <end position="1583"/>
    </location>
</feature>
<feature type="domain" description="MBD" evidence="3">
    <location>
        <begin position="238"/>
        <end position="308"/>
    </location>
</feature>
<feature type="domain" description="PWWP" evidence="2">
    <location>
        <begin position="1346"/>
        <end position="1408"/>
    </location>
</feature>
<feature type="region of interest" description="Disordered" evidence="4">
    <location>
        <begin position="81"/>
        <end position="115"/>
    </location>
</feature>
<feature type="region of interest" description="Disordered" evidence="4">
    <location>
        <begin position="427"/>
        <end position="457"/>
    </location>
</feature>
<feature type="region of interest" description="Disordered" evidence="4">
    <location>
        <begin position="556"/>
        <end position="579"/>
    </location>
</feature>
<feature type="region of interest" description="Disordered" evidence="4">
    <location>
        <begin position="630"/>
        <end position="694"/>
    </location>
</feature>
<feature type="region of interest" description="Disordered" evidence="4">
    <location>
        <begin position="839"/>
        <end position="862"/>
    </location>
</feature>
<feature type="region of interest" description="Disordered" evidence="4">
    <location>
        <begin position="940"/>
        <end position="980"/>
    </location>
</feature>
<feature type="region of interest" description="Disordered" evidence="4">
    <location>
        <begin position="1179"/>
        <end position="1247"/>
    </location>
</feature>
<feature type="region of interest" description="Disordered" evidence="4">
    <location>
        <begin position="1287"/>
        <end position="1339"/>
    </location>
</feature>
<feature type="region of interest" description="Disordered" evidence="4">
    <location>
        <begin position="1471"/>
        <end position="1497"/>
    </location>
</feature>
<feature type="coiled-coil region" evidence="1">
    <location>
        <begin position="1415"/>
        <end position="1446"/>
    </location>
</feature>
<feature type="compositionally biased region" description="Low complexity" evidence="4">
    <location>
        <begin position="83"/>
        <end position="104"/>
    </location>
</feature>
<feature type="compositionally biased region" description="Low complexity" evidence="4">
    <location>
        <begin position="430"/>
        <end position="439"/>
    </location>
</feature>
<feature type="compositionally biased region" description="Pro residues" evidence="4">
    <location>
        <begin position="440"/>
        <end position="449"/>
    </location>
</feature>
<feature type="compositionally biased region" description="Low complexity" evidence="4">
    <location>
        <begin position="563"/>
        <end position="579"/>
    </location>
</feature>
<feature type="compositionally biased region" description="Polar residues" evidence="4">
    <location>
        <begin position="658"/>
        <end position="677"/>
    </location>
</feature>
<feature type="compositionally biased region" description="Low complexity" evidence="4">
    <location>
        <begin position="679"/>
        <end position="693"/>
    </location>
</feature>
<feature type="compositionally biased region" description="Low complexity" evidence="4">
    <location>
        <begin position="851"/>
        <end position="862"/>
    </location>
</feature>
<feature type="compositionally biased region" description="Polar residues" evidence="4">
    <location>
        <begin position="1179"/>
        <end position="1195"/>
    </location>
</feature>
<feature type="compositionally biased region" description="Polar residues" evidence="4">
    <location>
        <begin position="1216"/>
        <end position="1240"/>
    </location>
</feature>
<feature type="compositionally biased region" description="Polar residues" evidence="4">
    <location>
        <begin position="1287"/>
        <end position="1313"/>
    </location>
</feature>
<feature type="compositionally biased region" description="Low complexity" evidence="4">
    <location>
        <begin position="1323"/>
        <end position="1333"/>
    </location>
</feature>
<feature type="compositionally biased region" description="Low complexity" evidence="4">
    <location>
        <begin position="1474"/>
        <end position="1488"/>
    </location>
</feature>
<feature type="splice variant" id="VSP_062317" description="In isoform B.">
    <location>
        <begin position="1"/>
        <end position="452"/>
    </location>
</feature>
<feature type="splice variant" id="VSP_062318" description="In isoform A.">
    <location>
        <begin position="1"/>
        <end position="203"/>
    </location>
</feature>
<feature type="splice variant" id="VSP_062319" description="In isoform B.">
    <original>QCVSSSEPDAAV</original>
    <variation>SFFEYVSHIDFF</variation>
    <location>
        <begin position="1215"/>
        <end position="1226"/>
    </location>
</feature>
<feature type="splice variant" id="VSP_062320" description="In isoform B.">
    <location>
        <begin position="1227"/>
        <end position="1583"/>
    </location>
</feature>
<feature type="splice variant" id="VSP_062321" description="In isoform A, isoform C and isoform G.">
    <original>ESPTTTQLLSSVPTAQPTVEKTTVRTPTKRSRRPQRGAARAAPSASDKSFPLPPRSFAIGELIWGPARGHPAWPGKIVKMPDGVCTPSQQFDHVWVQWFGGGGRSTSELIPVNSLQSLSEGLEAHHKAQKDTRKSRKLNSQLERAIQEAMTELDNISASSTPAA</original>
    <variation>GMRLATSNTNSTSASMSI</variation>
    <location>
        <begin position="1288"/>
        <end position="1451"/>
    </location>
</feature>
<feature type="splice variant" id="VSP_062322" description="In isoform F.">
    <location>
        <begin position="1288"/>
        <end position="1444"/>
    </location>
</feature>
<feature type="splice variant" id="VSP_062323" description="In isoform I.">
    <original>ESPT</original>
    <variation>GAAN</variation>
    <location>
        <begin position="1288"/>
        <end position="1291"/>
    </location>
</feature>
<feature type="splice variant" id="VSP_062324" description="In isoform I.">
    <location>
        <begin position="1292"/>
        <end position="1583"/>
    </location>
</feature>
<feature type="splice variant" id="VSP_062325" description="In isoform A and isoform C.">
    <original>TISAVPASAGPAVIGGQQQYQQQQQQQQQQQSPSSTNNKINGLARSKRQANTSGASMVLTTSTAATLSGLFNQQ</original>
    <variation>PLTTTALAGQRQLMHRQQAVHHHIPNISNSHPNTFLHSHKVVNFDYQGKDPSLTSTNCIHTLTHQHNTTRLATA</variation>
    <location>
        <begin position="1458"/>
        <end position="1531"/>
    </location>
</feature>
<feature type="splice variant" id="VSP_062326" description="In isoform G.">
    <original>TISAVPASAGPAVIGGQQQYQQQQQQQQQQQSPSSTNNKINGLARSKRQAN</original>
    <variation>PLTTTALAGQRQLMHRQQAVHHHIPNISNSHPNTFLHSHKVVNFDYQGAAN</variation>
    <location>
        <begin position="1458"/>
        <end position="1508"/>
    </location>
</feature>
<feature type="splice variant" id="VSP_062327" description="In isoform G.">
    <location>
        <begin position="1509"/>
        <end position="1583"/>
    </location>
</feature>
<feature type="splice variant" id="VSP_062328" description="In isoform A and isoform C.">
    <location>
        <begin position="1532"/>
        <end position="1583"/>
    </location>
</feature>
<feature type="sequence conflict" description="In Ref. 1; CAA66887." evidence="10" ref="1">
    <original>G</original>
    <variation>A</variation>
    <location>
        <position position="452"/>
    </location>
</feature>
<accession>A8JR92</accession>
<accession>A0A0B4K7E4</accession>
<accession>A0A0B4KHQ9</accession>
<accession>A0A0B4KHZ2</accession>
<accession>A0A0C4DHB2</accession>
<accession>A8JR93</accession>
<accession>Q24552</accession>
<accession>Q94892</accession>
<organism evidence="13">
    <name type="scientific">Drosophila melanogaster</name>
    <name type="common">Fruit fly</name>
    <dbReference type="NCBI Taxonomy" id="7227"/>
    <lineage>
        <taxon>Eukaryota</taxon>
        <taxon>Metazoa</taxon>
        <taxon>Ecdysozoa</taxon>
        <taxon>Arthropoda</taxon>
        <taxon>Hexapoda</taxon>
        <taxon>Insecta</taxon>
        <taxon>Pterygota</taxon>
        <taxon>Neoptera</taxon>
        <taxon>Endopterygota</taxon>
        <taxon>Diptera</taxon>
        <taxon>Brachycera</taxon>
        <taxon>Muscomorpha</taxon>
        <taxon>Ephydroidea</taxon>
        <taxon>Drosophilidae</taxon>
        <taxon>Drosophila</taxon>
        <taxon>Sophophora</taxon>
    </lineage>
</organism>
<proteinExistence type="evidence at protein level"/>
<sequence>MAAASAGQQQQQHQHQHKLNIAGSAETVVSGMQHQQQHQQQHQQINMFKQQQQMLPLQQQHHQFFQQQQTKFVSRVVTSAAVHQQQQQHHHQQQQQQQHQQQQQILPAGLVNGNGSGNMMQVANLHLQQQQQQRNSQQHIFVCPTSNQQLLLQQQQQQQQQQQQQQTKQRQAQIKLPIKSAATTGVTAATVAAATAATGATHCMSTTIAARQMSQNNQLYAKNVAKANNASSNGNINRKTATSYNGNLAPGWRRLTNNNEVAYISPSGKTLRTQFQIKDYLLTQGTCKCGLPCPLRPEYLFDFNAQVPNQPLKLPTEASTATPTPCRHQRRFLESQQLQLPQQQQQQQHLQHQQQQQQAVKDVSVDVAVSVSGPAAVSDVFSTLMTSTARTATMVTPTAATSPAQAATTTTHEMANKDADCHKYGNNKLPATNRTATTPTPAPTPPPQHPNGMPTSQALALGGVPVGVHPKRPTGGHVIKQPASVLGPPCTPPLAVGGANTVIQQQQPLQQHPNFKDDPAGYLQQQTALLHNSLGVGLDATKTAAGTSTARALPQEPIVHSSQQQQQQQQQQLQQQQQLQRQKIRRLSLFGKWETDPAPATNSQPTNGTRALQVDAAAFARPQKPQVTCVTLVPPPQESPVSSSAAETLEKRPEQVGAISTSHESPRQSLSSPTDSVDSAKSTPSASPKPQTQVPMQPQLLQMRPHLQANLSAQTPVTVPAHVRVMRQQQAQIIPGQRLPVASSSAAMATMTRSIVTSTAGTSTITGRPVATTLNNSNPTVAQLQSMANAMNGAGGGGQLIMTSSGQLLVIPTPSKQTTQHHRPGQPGQGVIIQQQQPAELHPQPGGGYIVSQPSPVAAASSSSSSSTVILNSGGAKLLHHQIITSQAGQINQATSGGSGNQPQTVLLNTLPNGGYIVQQQPQTQSPQQAEQILAMPQPPPAQTLIISSPDTKRRARKRKSSVCHTPPPSGSPAKIISPQISPSIPNQAPALLHQQAAAAAAAAPQFQQQFQLSPGIQGIVVNKPNPPQQPQTQQLLLQNGQILQQVNLIGQQLLMPAGLVMGPDATLLQIQNMPATSLMTPQGPVMLRTPSPQNKPSFISPSAGGQQYLVGANGQLSPIGQIYSTPMGLVMPTGQQGGASFVQASPTTTTIQIQQQPAPQPTQISLQPAQATYMTETVMSRQGTAASPPDTTTCSPRSPERPSSHRSSGSDMVQCVSSSEPDAAVSPQSTESRQSPSSTDCERSICKNNVFTQPSGIYKHSEPKIRRIHITSQTSAENGISLMQGQESPTTTQLLSSVPTAQPTVEKTTVRTPTKRSRRPQRGAARAAPSASDKSFPLPPRSFAIGELIWGPARGHPAWPGKIVKMPDGVCTPSQQFDHVWVQWFGGGGRSTSELIPVNSLQSLSEGLEAHHKAQKDTRKSRKLNSQLERAIQEAMTELDNISASSTPAATSSSSATISAVPASAGPAVIGGQQQYQQQQQQQQQQQSPSSTNNKINGLARSKRQANTSGASMVLTTSTAATLSGLFNQQRAKPIRIAPAPPVATTGTGNIGTIAAAGAAAASTGTGTATTSARSEILKLAK</sequence>
<evidence type="ECO:0000255" key="1"/>
<evidence type="ECO:0000255" key="2">
    <source>
        <dbReference type="PROSITE-ProRule" id="PRU00162"/>
    </source>
</evidence>
<evidence type="ECO:0000255" key="3">
    <source>
        <dbReference type="PROSITE-ProRule" id="PRU00338"/>
    </source>
</evidence>
<evidence type="ECO:0000256" key="4">
    <source>
        <dbReference type="SAM" id="MobiDB-lite"/>
    </source>
</evidence>
<evidence type="ECO:0000269" key="5">
    <source>
    </source>
</evidence>
<evidence type="ECO:0000269" key="6">
    <source>
    </source>
</evidence>
<evidence type="ECO:0000269" key="7">
    <source>
    </source>
</evidence>
<evidence type="ECO:0000303" key="8">
    <source>
    </source>
</evidence>
<evidence type="ECO:0000303" key="9">
    <source>
    </source>
</evidence>
<evidence type="ECO:0000305" key="10"/>
<evidence type="ECO:0000312" key="11">
    <source>
        <dbReference type="EMBL" id="CAA66887.1"/>
    </source>
</evidence>
<evidence type="ECO:0000312" key="12">
    <source>
        <dbReference type="FlyBase" id="FBgn0016754"/>
    </source>
</evidence>
<evidence type="ECO:0000312" key="13">
    <source>
        <dbReference type="Proteomes" id="UP000000803"/>
    </source>
</evidence>
<keyword id="KW-0025">Alternative splicing</keyword>
<keyword id="KW-0175">Coiled coil</keyword>
<keyword id="KW-0217">Developmental protein</keyword>
<keyword id="KW-1185">Reference proteome</keyword>
<reference evidence="11" key="1">
    <citation type="journal article" date="1997" name="Biol. Chem.">
        <title>six-banded, a novel Drosophila gene, is expressed in 6 segmental stripes during embryonic development and in the eye imaginal disc.</title>
        <authorList>
            <person name="Zeidler M.P."/>
            <person name="Mlodzik M."/>
        </authorList>
    </citation>
    <scope>NUCLEOTIDE SEQUENCE [MRNA] (ISOFORMS A AND B)</scope>
    <scope>FUNCTION</scope>
    <scope>ALTERNATIVE SPLICING</scope>
    <scope>DEVELOPMENTAL STAGE</scope>
</reference>
<reference evidence="13" key="2">
    <citation type="journal article" date="2000" name="Science">
        <title>The genome sequence of Drosophila melanogaster.</title>
        <authorList>
            <person name="Adams M.D."/>
            <person name="Celniker S.E."/>
            <person name="Holt R.A."/>
            <person name="Evans C.A."/>
            <person name="Gocayne J.D."/>
            <person name="Amanatides P.G."/>
            <person name="Scherer S.E."/>
            <person name="Li P.W."/>
            <person name="Hoskins R.A."/>
            <person name="Galle R.F."/>
            <person name="George R.A."/>
            <person name="Lewis S.E."/>
            <person name="Richards S."/>
            <person name="Ashburner M."/>
            <person name="Henderson S.N."/>
            <person name="Sutton G.G."/>
            <person name="Wortman J.R."/>
            <person name="Yandell M.D."/>
            <person name="Zhang Q."/>
            <person name="Chen L.X."/>
            <person name="Brandon R.C."/>
            <person name="Rogers Y.-H.C."/>
            <person name="Blazej R.G."/>
            <person name="Champe M."/>
            <person name="Pfeiffer B.D."/>
            <person name="Wan K.H."/>
            <person name="Doyle C."/>
            <person name="Baxter E.G."/>
            <person name="Helt G."/>
            <person name="Nelson C.R."/>
            <person name="Miklos G.L.G."/>
            <person name="Abril J.F."/>
            <person name="Agbayani A."/>
            <person name="An H.-J."/>
            <person name="Andrews-Pfannkoch C."/>
            <person name="Baldwin D."/>
            <person name="Ballew R.M."/>
            <person name="Basu A."/>
            <person name="Baxendale J."/>
            <person name="Bayraktaroglu L."/>
            <person name="Beasley E.M."/>
            <person name="Beeson K.Y."/>
            <person name="Benos P.V."/>
            <person name="Berman B.P."/>
            <person name="Bhandari D."/>
            <person name="Bolshakov S."/>
            <person name="Borkova D."/>
            <person name="Botchan M.R."/>
            <person name="Bouck J."/>
            <person name="Brokstein P."/>
            <person name="Brottier P."/>
            <person name="Burtis K.C."/>
            <person name="Busam D.A."/>
            <person name="Butler H."/>
            <person name="Cadieu E."/>
            <person name="Center A."/>
            <person name="Chandra I."/>
            <person name="Cherry J.M."/>
            <person name="Cawley S."/>
            <person name="Dahlke C."/>
            <person name="Davenport L.B."/>
            <person name="Davies P."/>
            <person name="de Pablos B."/>
            <person name="Delcher A."/>
            <person name="Deng Z."/>
            <person name="Mays A.D."/>
            <person name="Dew I."/>
            <person name="Dietz S.M."/>
            <person name="Dodson K."/>
            <person name="Doup L.E."/>
            <person name="Downes M."/>
            <person name="Dugan-Rocha S."/>
            <person name="Dunkov B.C."/>
            <person name="Dunn P."/>
            <person name="Durbin K.J."/>
            <person name="Evangelista C.C."/>
            <person name="Ferraz C."/>
            <person name="Ferriera S."/>
            <person name="Fleischmann W."/>
            <person name="Fosler C."/>
            <person name="Gabrielian A.E."/>
            <person name="Garg N.S."/>
            <person name="Gelbart W.M."/>
            <person name="Glasser K."/>
            <person name="Glodek A."/>
            <person name="Gong F."/>
            <person name="Gorrell J.H."/>
            <person name="Gu Z."/>
            <person name="Guan P."/>
            <person name="Harris M."/>
            <person name="Harris N.L."/>
            <person name="Harvey D.A."/>
            <person name="Heiman T.J."/>
            <person name="Hernandez J.R."/>
            <person name="Houck J."/>
            <person name="Hostin D."/>
            <person name="Houston K.A."/>
            <person name="Howland T.J."/>
            <person name="Wei M.-H."/>
            <person name="Ibegwam C."/>
            <person name="Jalali M."/>
            <person name="Kalush F."/>
            <person name="Karpen G.H."/>
            <person name="Ke Z."/>
            <person name="Kennison J.A."/>
            <person name="Ketchum K.A."/>
            <person name="Kimmel B.E."/>
            <person name="Kodira C.D."/>
            <person name="Kraft C.L."/>
            <person name="Kravitz S."/>
            <person name="Kulp D."/>
            <person name="Lai Z."/>
            <person name="Lasko P."/>
            <person name="Lei Y."/>
            <person name="Levitsky A.A."/>
            <person name="Li J.H."/>
            <person name="Li Z."/>
            <person name="Liang Y."/>
            <person name="Lin X."/>
            <person name="Liu X."/>
            <person name="Mattei B."/>
            <person name="McIntosh T.C."/>
            <person name="McLeod M.P."/>
            <person name="McPherson D."/>
            <person name="Merkulov G."/>
            <person name="Milshina N.V."/>
            <person name="Mobarry C."/>
            <person name="Morris J."/>
            <person name="Moshrefi A."/>
            <person name="Mount S.M."/>
            <person name="Moy M."/>
            <person name="Murphy B."/>
            <person name="Murphy L."/>
            <person name="Muzny D.M."/>
            <person name="Nelson D.L."/>
            <person name="Nelson D.R."/>
            <person name="Nelson K.A."/>
            <person name="Nixon K."/>
            <person name="Nusskern D.R."/>
            <person name="Pacleb J.M."/>
            <person name="Palazzolo M."/>
            <person name="Pittman G.S."/>
            <person name="Pan S."/>
            <person name="Pollard J."/>
            <person name="Puri V."/>
            <person name="Reese M.G."/>
            <person name="Reinert K."/>
            <person name="Remington K."/>
            <person name="Saunders R.D.C."/>
            <person name="Scheeler F."/>
            <person name="Shen H."/>
            <person name="Shue B.C."/>
            <person name="Siden-Kiamos I."/>
            <person name="Simpson M."/>
            <person name="Skupski M.P."/>
            <person name="Smith T.J."/>
            <person name="Spier E."/>
            <person name="Spradling A.C."/>
            <person name="Stapleton M."/>
            <person name="Strong R."/>
            <person name="Sun E."/>
            <person name="Svirskas R."/>
            <person name="Tector C."/>
            <person name="Turner R."/>
            <person name="Venter E."/>
            <person name="Wang A.H."/>
            <person name="Wang X."/>
            <person name="Wang Z.-Y."/>
            <person name="Wassarman D.A."/>
            <person name="Weinstock G.M."/>
            <person name="Weissenbach J."/>
            <person name="Williams S.M."/>
            <person name="Woodage T."/>
            <person name="Worley K.C."/>
            <person name="Wu D."/>
            <person name="Yang S."/>
            <person name="Yao Q.A."/>
            <person name="Ye J."/>
            <person name="Yeh R.-F."/>
            <person name="Zaveri J.S."/>
            <person name="Zhan M."/>
            <person name="Zhang G."/>
            <person name="Zhao Q."/>
            <person name="Zheng L."/>
            <person name="Zheng X.H."/>
            <person name="Zhong F.N."/>
            <person name="Zhong W."/>
            <person name="Zhou X."/>
            <person name="Zhu S.C."/>
            <person name="Zhu X."/>
            <person name="Smith H.O."/>
            <person name="Gibbs R.A."/>
            <person name="Myers E.W."/>
            <person name="Rubin G.M."/>
            <person name="Venter J.C."/>
        </authorList>
    </citation>
    <scope>NUCLEOTIDE SEQUENCE [LARGE SCALE GENOMIC DNA]</scope>
    <source>
        <strain evidence="13">Berkeley</strain>
    </source>
</reference>
<reference evidence="13" key="3">
    <citation type="journal article" date="2002" name="Genome Biol.">
        <title>Annotation of the Drosophila melanogaster euchromatic genome: a systematic review.</title>
        <authorList>
            <person name="Misra S."/>
            <person name="Crosby M.A."/>
            <person name="Mungall C.J."/>
            <person name="Matthews B.B."/>
            <person name="Campbell K.S."/>
            <person name="Hradecky P."/>
            <person name="Huang Y."/>
            <person name="Kaminker J.S."/>
            <person name="Millburn G.H."/>
            <person name="Prochnik S.E."/>
            <person name="Smith C.D."/>
            <person name="Tupy J.L."/>
            <person name="Whitfield E.J."/>
            <person name="Bayraktaroglu L."/>
            <person name="Berman B.P."/>
            <person name="Bettencourt B.R."/>
            <person name="Celniker S.E."/>
            <person name="de Grey A.D.N.J."/>
            <person name="Drysdale R.A."/>
            <person name="Harris N.L."/>
            <person name="Richter J."/>
            <person name="Russo S."/>
            <person name="Schroeder A.J."/>
            <person name="Shu S.Q."/>
            <person name="Stapleton M."/>
            <person name="Yamada C."/>
            <person name="Ashburner M."/>
            <person name="Gelbart W.M."/>
            <person name="Rubin G.M."/>
            <person name="Lewis S.E."/>
        </authorList>
    </citation>
    <scope>GENOME REANNOTATION</scope>
    <source>
        <strain evidence="13">Berkeley</strain>
    </source>
</reference>
<reference evidence="10" key="4">
    <citation type="journal article" date="2012" name="Am. J. Hum. Genet.">
        <title>Disruption of an EHMT1-associated chromatin-modification module causes intellectual disability.</title>
        <authorList>
            <person name="Kleefstra T."/>
            <person name="Kramer J.M."/>
            <person name="Neveling K."/>
            <person name="Willemsen M.H."/>
            <person name="Koemans T.S."/>
            <person name="Vissers L.E."/>
            <person name="Wissink-Lindhout W."/>
            <person name="Fenckova M."/>
            <person name="van den Akker W.M."/>
            <person name="Kasri N.N."/>
            <person name="Nillesen W.M."/>
            <person name="Prescott T."/>
            <person name="Clark R.D."/>
            <person name="Devriendt K."/>
            <person name="van Reeuwijk J."/>
            <person name="de Brouwer A.P."/>
            <person name="Gilissen C."/>
            <person name="Zhou H."/>
            <person name="Brunner H.G."/>
            <person name="Veltman J.A."/>
            <person name="Schenck A."/>
            <person name="van Bokhoven H."/>
        </authorList>
    </citation>
    <scope>FUNCTION</scope>
</reference>
<reference evidence="10" key="5">
    <citation type="journal article" date="2022" name="Genome Biol.">
        <title>MBD5 and MBD6 stabilize the BAP1 complex and promote BAP1-dependent cancer.</title>
        <authorList>
            <person name="Tsuboyama N."/>
            <person name="Szczepanski A.P."/>
            <person name="Zhao Z."/>
            <person name="Wang L."/>
        </authorList>
    </citation>
    <scope>FUNCTION</scope>
    <scope>IDENTIFICATION IN THE PR-DUB COMPLEX</scope>
    <scope>INTERACTION WITH ASX</scope>
    <scope>IDENTIFICATION BY MASS SPECTROMETRY</scope>
</reference>
<comment type="function">
    <text evidence="5 6 7">Non-catalytic component of the polycomb repressive deubiquitinase (PR-DUB) complex, a complex that specifically mediates deubiquitination of histone H2A monoubiquitinated at 'Lys-119' (H2AK118ub1) (PubMed:36180891). Important for maintaining stability of the PR-DUB complex (PubMed:36180891). Probable epigenetic regulator involved in developmental pattern formation and eye development (PubMed:22726846, PubMed:9372180).</text>
</comment>
<comment type="subunit">
    <text evidence="6">Component of the polycomb repressive deubiquitinase (PR-DUB) complex, at least composed of caly/calypso, Asx and sba (MDB5/6 homolog) (PubMed:36180891). Interacts (via MBD domain) with Asx (via PHD domain); the interaction is important for the stability of the PR-DUB complex (PubMed:36180891).</text>
</comment>
<comment type="alternative products">
    <event type="alternative splicing"/>
    <isoform>
        <id>A8JR92-1</id>
        <name evidence="12">D</name>
        <name evidence="12">E</name>
        <name evidence="12">H</name>
        <sequence type="displayed"/>
    </isoform>
    <isoform>
        <id>A8JR92-2</id>
        <name evidence="10">A</name>
        <name evidence="9">Type I</name>
        <sequence type="described" ref="VSP_062318 VSP_062321 VSP_062325 VSP_062328"/>
    </isoform>
    <isoform>
        <id>A8JR92-3</id>
        <name evidence="10">B</name>
        <name evidence="9">Type II</name>
        <sequence type="described" ref="VSP_062317 VSP_062319 VSP_062320"/>
    </isoform>
    <isoform>
        <id>A8JR92-4</id>
        <name evidence="12">C</name>
        <sequence type="described" ref="VSP_062321 VSP_062325 VSP_062328"/>
    </isoform>
    <isoform>
        <id>A8JR92-5</id>
        <name evidence="12">F</name>
        <sequence type="described" ref="VSP_062322"/>
    </isoform>
    <isoform>
        <id>A8JR92-6</id>
        <name evidence="12">G</name>
        <sequence type="described" ref="VSP_062321 VSP_062326 VSP_062327"/>
    </isoform>
    <isoform>
        <id>A8JR92-7</id>
        <name evidence="12">I</name>
        <sequence type="described" ref="VSP_062323 VSP_062324"/>
    </isoform>
    <text evidence="7">Isoforms A and B are produced by alternative splicing.</text>
</comment>
<comment type="developmental stage">
    <text evidence="7">Expressed between stage 5 and 12 of embryogenesis, initially in 6 distinct bands posterior to the cephalic furrow that develop into 12 bands during germ band extension (PubMed:9372180). Not expressed between stage 12 and 16 of embryogenesis, but after stage 16 expressed in a segmentally repeated pattern in the central nervous system (PubMed:9372180). In 3rd instar larvae expressed in antennal imaginal discs in a circular pattern, and in eye imaginal discs in all cells posterior to the morphogenetic furrow and a single band anterior to the morphogenetic furrow; no expression is detected in other imaginal discs (PubMed:9372180).</text>
</comment>
<comment type="miscellaneous">
    <text evidence="9">Named 'six-banded' due to its distinctive embryonic expression pattern.</text>
</comment>
<comment type="sequence caution" evidence="10">
    <conflict type="erroneous termination">
        <sequence resource="EMBL-CDS" id="AGB96268"/>
    </conflict>
    <text>Extended C-terminus.</text>
</comment>
<dbReference type="EMBL" id="X98235">
    <property type="protein sequence ID" value="CAA66887.1"/>
    <property type="molecule type" value="mRNA"/>
</dbReference>
<dbReference type="EMBL" id="Y07567">
    <property type="protein sequence ID" value="CAA68852.1"/>
    <property type="molecule type" value="mRNA"/>
</dbReference>
<dbReference type="EMBL" id="AE014297">
    <property type="protein sequence ID" value="AAF56201.3"/>
    <property type="molecule type" value="Genomic_DNA"/>
</dbReference>
<dbReference type="EMBL" id="AE014297">
    <property type="protein sequence ID" value="AAO41596.2"/>
    <property type="molecule type" value="Genomic_DNA"/>
</dbReference>
<dbReference type="EMBL" id="AE014297">
    <property type="protein sequence ID" value="ABW08741.1"/>
    <property type="molecule type" value="Genomic_DNA"/>
</dbReference>
<dbReference type="EMBL" id="AE014297">
    <property type="protein sequence ID" value="ABW08742.1"/>
    <property type="molecule type" value="Genomic_DNA"/>
</dbReference>
<dbReference type="EMBL" id="AE014297">
    <property type="protein sequence ID" value="AFH06589.1"/>
    <property type="molecule type" value="Genomic_DNA"/>
</dbReference>
<dbReference type="EMBL" id="AE014297">
    <property type="protein sequence ID" value="AGB96268.1"/>
    <property type="status" value="ALT_SEQ"/>
    <property type="molecule type" value="Genomic_DNA"/>
</dbReference>
<dbReference type="EMBL" id="AE014297">
    <property type="protein sequence ID" value="AGB96269.1"/>
    <property type="molecule type" value="Genomic_DNA"/>
</dbReference>
<dbReference type="RefSeq" id="NP_001097892.1">
    <molecule id="A8JR92-4"/>
    <property type="nucleotide sequence ID" value="NM_001104422.3"/>
</dbReference>
<dbReference type="RefSeq" id="NP_001097893.1">
    <molecule id="A8JR92-1"/>
    <property type="nucleotide sequence ID" value="NM_001104423.2"/>
</dbReference>
<dbReference type="RefSeq" id="NP_001247271.1">
    <molecule id="A8JR92-5"/>
    <property type="nucleotide sequence ID" value="NM_001260342.2"/>
</dbReference>
<dbReference type="RefSeq" id="NP_001262888.1">
    <property type="nucleotide sequence ID" value="NM_001275959.1"/>
</dbReference>
<dbReference type="RefSeq" id="NP_001262889.1">
    <molecule id="A8JR92-7"/>
    <property type="nucleotide sequence ID" value="NM_001275960.1"/>
</dbReference>
<dbReference type="RefSeq" id="NP_732911.2">
    <molecule id="A8JR92-6"/>
    <property type="nucleotide sequence ID" value="NM_170094.4"/>
</dbReference>
<dbReference type="RefSeq" id="NP_788726.2">
    <molecule id="A8JR92-1"/>
    <property type="nucleotide sequence ID" value="NM_176549.3"/>
</dbReference>
<dbReference type="SMR" id="A8JR92"/>
<dbReference type="IntAct" id="A8JR92">
    <property type="interactions" value="2"/>
</dbReference>
<dbReference type="PaxDb" id="7227-FBpp0111802"/>
<dbReference type="EnsemblMetazoa" id="FBtr0112888">
    <molecule id="A8JR92-4"/>
    <property type="protein sequence ID" value="FBpp0111801"/>
    <property type="gene ID" value="FBgn0016754"/>
</dbReference>
<dbReference type="EnsemblMetazoa" id="FBtr0112889">
    <molecule id="A8JR92-1"/>
    <property type="protein sequence ID" value="FBpp0111802"/>
    <property type="gene ID" value="FBgn0016754"/>
</dbReference>
<dbReference type="EnsemblMetazoa" id="FBtr0308562">
    <molecule id="A8JR92-1"/>
    <property type="protein sequence ID" value="FBpp0300786"/>
    <property type="gene ID" value="FBgn0016754"/>
</dbReference>
<dbReference type="EnsemblMetazoa" id="FBtr0308563">
    <molecule id="A8JR92-5"/>
    <property type="protein sequence ID" value="FBpp0300787"/>
    <property type="gene ID" value="FBgn0016754"/>
</dbReference>
<dbReference type="EnsemblMetazoa" id="FBtr0308564">
    <molecule id="A8JR92-6"/>
    <property type="protein sequence ID" value="FBpp0300788"/>
    <property type="gene ID" value="FBgn0016754"/>
</dbReference>
<dbReference type="EnsemblMetazoa" id="FBtr0330380">
    <property type="protein sequence ID" value="FBpp0303406"/>
    <property type="gene ID" value="FBgn0016754"/>
</dbReference>
<dbReference type="EnsemblMetazoa" id="FBtr0335206">
    <molecule id="A8JR92-7"/>
    <property type="protein sequence ID" value="FBpp0307193"/>
    <property type="gene ID" value="FBgn0016754"/>
</dbReference>
<dbReference type="GeneID" id="42824"/>
<dbReference type="KEGG" id="dme:Dmel_CG13598"/>
<dbReference type="UCSC" id="CG13598-RC">
    <property type="organism name" value="d. melanogaster"/>
</dbReference>
<dbReference type="UCSC" id="CG13598-RD">
    <molecule id="A8JR92-1"/>
    <property type="organism name" value="d. melanogaster"/>
</dbReference>
<dbReference type="AGR" id="FB:FBgn0016754"/>
<dbReference type="CTD" id="42824"/>
<dbReference type="FlyBase" id="FBgn0016754">
    <property type="gene designation" value="sba"/>
</dbReference>
<dbReference type="VEuPathDB" id="VectorBase:FBgn0016754"/>
<dbReference type="eggNOG" id="ENOG502QTC7">
    <property type="taxonomic scope" value="Eukaryota"/>
</dbReference>
<dbReference type="GeneTree" id="ENSGT00530000064137"/>
<dbReference type="HOGENOM" id="CLU_003350_0_0_1"/>
<dbReference type="InParanoid" id="A0A0B4KHZ2"/>
<dbReference type="OMA" id="KANCRTP"/>
<dbReference type="OrthoDB" id="641149at2759"/>
<dbReference type="Reactome" id="R-DME-5689603">
    <property type="pathway name" value="UCH proteinases"/>
</dbReference>
<dbReference type="BioGRID-ORCS" id="42824">
    <property type="hits" value="0 hits in 3 CRISPR screens"/>
</dbReference>
<dbReference type="GenomeRNAi" id="42824"/>
<dbReference type="Proteomes" id="UP000000803">
    <property type="component" value="Chromosome 3R"/>
</dbReference>
<dbReference type="Bgee" id="FBgn0016754">
    <property type="expression patterns" value="Expressed in enteroblast (Drosophila) in digestive tract and 255 other cell types or tissues"/>
</dbReference>
<dbReference type="ExpressionAtlas" id="A8JR92">
    <property type="expression patterns" value="baseline and differential"/>
</dbReference>
<dbReference type="GO" id="GO:0005634">
    <property type="term" value="C:nucleus"/>
    <property type="evidence" value="ECO:0000250"/>
    <property type="project" value="FlyBase"/>
</dbReference>
<dbReference type="GO" id="GO:0003682">
    <property type="term" value="F:chromatin binding"/>
    <property type="evidence" value="ECO:0000250"/>
    <property type="project" value="FlyBase"/>
</dbReference>
<dbReference type="GO" id="GO:0003677">
    <property type="term" value="F:DNA binding"/>
    <property type="evidence" value="ECO:0007669"/>
    <property type="project" value="InterPro"/>
</dbReference>
<dbReference type="CDD" id="cd20141">
    <property type="entry name" value="PWWP_MBD5"/>
    <property type="match status" value="1"/>
</dbReference>
<dbReference type="FunFam" id="2.30.30.140:FF:000107">
    <property type="entry name" value="Six-banded, isoform H"/>
    <property type="match status" value="1"/>
</dbReference>
<dbReference type="Gene3D" id="2.30.30.140">
    <property type="match status" value="1"/>
</dbReference>
<dbReference type="InterPro" id="IPR016177">
    <property type="entry name" value="DNA-bd_dom_sf"/>
</dbReference>
<dbReference type="InterPro" id="IPR001739">
    <property type="entry name" value="Methyl_CpG_DNA-bd"/>
</dbReference>
<dbReference type="InterPro" id="IPR000313">
    <property type="entry name" value="PWWP_dom"/>
</dbReference>
<dbReference type="PANTHER" id="PTHR16112">
    <property type="entry name" value="METHYL-CPG BINDING PROTEIN, DROSOPHILA"/>
    <property type="match status" value="1"/>
</dbReference>
<dbReference type="PANTHER" id="PTHR16112:SF16">
    <property type="entry name" value="SIX-BANDED, ISOFORM H"/>
    <property type="match status" value="1"/>
</dbReference>
<dbReference type="Pfam" id="PF00855">
    <property type="entry name" value="PWWP"/>
    <property type="match status" value="1"/>
</dbReference>
<dbReference type="SMART" id="SM00391">
    <property type="entry name" value="MBD"/>
    <property type="match status" value="1"/>
</dbReference>
<dbReference type="SMART" id="SM00293">
    <property type="entry name" value="PWWP"/>
    <property type="match status" value="1"/>
</dbReference>
<dbReference type="SUPFAM" id="SSF54171">
    <property type="entry name" value="DNA-binding domain"/>
    <property type="match status" value="1"/>
</dbReference>
<dbReference type="SUPFAM" id="SSF63748">
    <property type="entry name" value="Tudor/PWWP/MBT"/>
    <property type="match status" value="1"/>
</dbReference>
<dbReference type="PROSITE" id="PS50982">
    <property type="entry name" value="MBD"/>
    <property type="match status" value="1"/>
</dbReference>
<dbReference type="PROSITE" id="PS50812">
    <property type="entry name" value="PWWP"/>
    <property type="match status" value="1"/>
</dbReference>